<evidence type="ECO:0000250" key="1"/>
<evidence type="ECO:0000255" key="2">
    <source>
        <dbReference type="PROSITE-ProRule" id="PRU00285"/>
    </source>
</evidence>
<evidence type="ECO:0000256" key="3">
    <source>
        <dbReference type="SAM" id="MobiDB-lite"/>
    </source>
</evidence>
<evidence type="ECO:0000269" key="4">
    <source>
    </source>
</evidence>
<proteinExistence type="evidence at protein level"/>
<name>CRYAB_SQUAC</name>
<reference key="1">
    <citation type="journal article" date="1988" name="J. Biol. Chem.">
        <title>Dogfish alpha-crystallin sequences. Comparison with small heat shock proteins and Schistosoma egg antigen.</title>
        <authorList>
            <person name="de Jong W.W."/>
            <person name="Leunissen J.A.M."/>
            <person name="Leenen P.J.M."/>
            <person name="Zweers A."/>
            <person name="Versteeg M."/>
        </authorList>
    </citation>
    <scope>PROTEIN SEQUENCE</scope>
    <scope>ACETYLATION AT MET-1</scope>
</reference>
<accession>P02512</accession>
<dbReference type="PIR" id="B28190">
    <property type="entry name" value="CYDFAB"/>
</dbReference>
<dbReference type="SMR" id="P02512"/>
<dbReference type="iPTMnet" id="P02512"/>
<dbReference type="GO" id="GO:0005737">
    <property type="term" value="C:cytoplasm"/>
    <property type="evidence" value="ECO:0007669"/>
    <property type="project" value="TreeGrafter"/>
</dbReference>
<dbReference type="GO" id="GO:0005634">
    <property type="term" value="C:nucleus"/>
    <property type="evidence" value="ECO:0007669"/>
    <property type="project" value="TreeGrafter"/>
</dbReference>
<dbReference type="GO" id="GO:0046872">
    <property type="term" value="F:metal ion binding"/>
    <property type="evidence" value="ECO:0007669"/>
    <property type="project" value="UniProtKB-KW"/>
</dbReference>
<dbReference type="GO" id="GO:0042803">
    <property type="term" value="F:protein homodimerization activity"/>
    <property type="evidence" value="ECO:0000250"/>
    <property type="project" value="UniProtKB"/>
</dbReference>
<dbReference type="GO" id="GO:0005212">
    <property type="term" value="F:structural constituent of eye lens"/>
    <property type="evidence" value="ECO:0007669"/>
    <property type="project" value="UniProtKB-KW"/>
</dbReference>
<dbReference type="GO" id="GO:0051082">
    <property type="term" value="F:unfolded protein binding"/>
    <property type="evidence" value="ECO:0007669"/>
    <property type="project" value="TreeGrafter"/>
</dbReference>
<dbReference type="GO" id="GO:0043066">
    <property type="term" value="P:negative regulation of apoptotic process"/>
    <property type="evidence" value="ECO:0007669"/>
    <property type="project" value="TreeGrafter"/>
</dbReference>
<dbReference type="GO" id="GO:0042026">
    <property type="term" value="P:protein refolding"/>
    <property type="evidence" value="ECO:0007669"/>
    <property type="project" value="TreeGrafter"/>
</dbReference>
<dbReference type="GO" id="GO:0009408">
    <property type="term" value="P:response to heat"/>
    <property type="evidence" value="ECO:0007669"/>
    <property type="project" value="TreeGrafter"/>
</dbReference>
<dbReference type="CDD" id="cd06478">
    <property type="entry name" value="ACD_HspB4-5-6"/>
    <property type="match status" value="1"/>
</dbReference>
<dbReference type="FunFam" id="2.60.40.790:FF:000011">
    <property type="entry name" value="Alpha-crystallin B chain"/>
    <property type="match status" value="1"/>
</dbReference>
<dbReference type="Gene3D" id="2.60.40.790">
    <property type="match status" value="1"/>
</dbReference>
<dbReference type="InterPro" id="IPR002068">
    <property type="entry name" value="A-crystallin/Hsp20_dom"/>
</dbReference>
<dbReference type="InterPro" id="IPR055269">
    <property type="entry name" value="Alpha-crystallin/HSP_16"/>
</dbReference>
<dbReference type="InterPro" id="IPR001436">
    <property type="entry name" value="Alpha-crystallin/sHSP_animal"/>
</dbReference>
<dbReference type="InterPro" id="IPR003090">
    <property type="entry name" value="Alpha-crystallin_N"/>
</dbReference>
<dbReference type="InterPro" id="IPR008978">
    <property type="entry name" value="HSP20-like_chaperone"/>
</dbReference>
<dbReference type="PANTHER" id="PTHR45640:SF5">
    <property type="entry name" value="ALPHA-CRYSTALLIN B CHAIN"/>
    <property type="match status" value="1"/>
</dbReference>
<dbReference type="PANTHER" id="PTHR45640">
    <property type="entry name" value="HEAT SHOCK PROTEIN HSP-12.2-RELATED"/>
    <property type="match status" value="1"/>
</dbReference>
<dbReference type="Pfam" id="PF00525">
    <property type="entry name" value="Crystallin"/>
    <property type="match status" value="1"/>
</dbReference>
<dbReference type="Pfam" id="PF00011">
    <property type="entry name" value="HSP20"/>
    <property type="match status" value="1"/>
</dbReference>
<dbReference type="PIRSF" id="PIRSF036514">
    <property type="entry name" value="Sm_HSP_B1"/>
    <property type="match status" value="1"/>
</dbReference>
<dbReference type="PRINTS" id="PR00299">
    <property type="entry name" value="ACRYSTALLIN"/>
</dbReference>
<dbReference type="SUPFAM" id="SSF49764">
    <property type="entry name" value="HSP20-like chaperones"/>
    <property type="match status" value="1"/>
</dbReference>
<dbReference type="PROSITE" id="PS01031">
    <property type="entry name" value="SHSP"/>
    <property type="match status" value="1"/>
</dbReference>
<protein>
    <recommendedName>
        <fullName>Alpha-crystallin B chain</fullName>
    </recommendedName>
    <alternativeName>
        <fullName>Alpha(B)-crystallin</fullName>
    </alternativeName>
</protein>
<organism>
    <name type="scientific">Squalus acanthias</name>
    <name type="common">Spiny dogfish</name>
    <dbReference type="NCBI Taxonomy" id="7797"/>
    <lineage>
        <taxon>Eukaryota</taxon>
        <taxon>Metazoa</taxon>
        <taxon>Chordata</taxon>
        <taxon>Craniata</taxon>
        <taxon>Vertebrata</taxon>
        <taxon>Chondrichthyes</taxon>
        <taxon>Elasmobranchii</taxon>
        <taxon>Squalomorphii</taxon>
        <taxon>Squaliformes</taxon>
        <taxon>Squalidae</taxon>
        <taxon>Squalus</taxon>
    </lineage>
</organism>
<gene>
    <name type="primary">CRYAB</name>
</gene>
<keyword id="KW-0007">Acetylation</keyword>
<keyword id="KW-0903">Direct protein sequencing</keyword>
<keyword id="KW-0273">Eye lens protein</keyword>
<keyword id="KW-0479">Metal-binding</keyword>
<keyword id="KW-0862">Zinc</keyword>
<comment type="function">
    <text>May contribute to the transparency and refractive index of the lens.</text>
</comment>
<comment type="subunit">
    <text evidence="1">Heteromer composed of three CRYAA and one CRYAB subunits. Aggregates with homologous proteins, including the small heat shock protein HSPB1, to form large heteromeric complexes. Inter-subunit bridging via zinc ions enhances stability, which is crucial as there is no protein turn over in the lens. Interacts with HSPBAP1 and TTN/titin (By similarity).</text>
</comment>
<comment type="similarity">
    <text evidence="2">Belongs to the small heat shock protein (HSP20) family.</text>
</comment>
<feature type="chain" id="PRO_0000125921" description="Alpha-crystallin B chain">
    <location>
        <begin position="1"/>
        <end position="177"/>
    </location>
</feature>
<feature type="domain" description="sHSP" evidence="2">
    <location>
        <begin position="58"/>
        <end position="166"/>
    </location>
</feature>
<feature type="region of interest" description="Disordered" evidence="3">
    <location>
        <begin position="155"/>
        <end position="177"/>
    </location>
</feature>
<feature type="compositionally biased region" description="Basic and acidic residues" evidence="3">
    <location>
        <begin position="155"/>
        <end position="169"/>
    </location>
</feature>
<feature type="binding site" evidence="1">
    <location>
        <position position="85"/>
    </location>
    <ligand>
        <name>Zn(2+)</name>
        <dbReference type="ChEBI" id="CHEBI:29105"/>
        <label>1</label>
    </ligand>
</feature>
<feature type="binding site" evidence="1">
    <location>
        <position position="106"/>
    </location>
    <ligand>
        <name>Zn(2+)</name>
        <dbReference type="ChEBI" id="CHEBI:29105"/>
        <label>2</label>
    </ligand>
</feature>
<feature type="binding site" evidence="1">
    <location>
        <position position="108"/>
    </location>
    <ligand>
        <name>Zn(2+)</name>
        <dbReference type="ChEBI" id="CHEBI:29105"/>
        <label>2</label>
    </ligand>
</feature>
<feature type="binding site" evidence="1">
    <location>
        <position position="113"/>
    </location>
    <ligand>
        <name>Zn(2+)</name>
        <dbReference type="ChEBI" id="CHEBI:29105"/>
        <label>1</label>
    </ligand>
</feature>
<feature type="binding site" evidence="1">
    <location>
        <position position="121"/>
    </location>
    <ligand>
        <name>Zn(2+)</name>
        <dbReference type="ChEBI" id="CHEBI:29105"/>
        <label>1</label>
    </ligand>
</feature>
<feature type="modified residue" description="N-acetylmethionine" evidence="4">
    <location>
        <position position="1"/>
    </location>
</feature>
<sequence length="177" mass="20254">MDIAIQHPWLRRPLFPSSIFPSRIFDQNFGEHFDPDLFPSFSSMLSPFYWRMGAPMARMPSWAQTGLSELRLDKDKFAIHLDVKHFTPEELRVKILGDFIEVQAQHEERQDEHGYVSREFHRKYKVPAGVDPLVITCSLSADGVLTITGPRKVADVPERSVPISRDEKPAVAGPQQK</sequence>